<protein>
    <recommendedName>
        <fullName>Sporulation protein YkvU</fullName>
    </recommendedName>
</protein>
<gene>
    <name type="primary">ykvU</name>
    <name type="ordered locus">BSU13830</name>
</gene>
<name>YKVU_BACSU</name>
<dbReference type="EMBL" id="AL009126">
    <property type="protein sequence ID" value="CAB13256.1"/>
    <property type="molecule type" value="Genomic_DNA"/>
</dbReference>
<dbReference type="PIR" id="D69869">
    <property type="entry name" value="D69869"/>
</dbReference>
<dbReference type="RefSeq" id="NP_389266.1">
    <property type="nucleotide sequence ID" value="NC_000964.3"/>
</dbReference>
<dbReference type="RefSeq" id="WP_003245552.1">
    <property type="nucleotide sequence ID" value="NZ_OZ025638.1"/>
</dbReference>
<dbReference type="SMR" id="O31686"/>
<dbReference type="FunCoup" id="O31686">
    <property type="interactions" value="23"/>
</dbReference>
<dbReference type="STRING" id="224308.BSU13830"/>
<dbReference type="TCDB" id="2.A.66.2.17">
    <property type="family name" value="the multidrug/oligosaccharidyl-lipid/polysaccharide (mop) flippase superfamily"/>
</dbReference>
<dbReference type="PaxDb" id="224308-BSU13830"/>
<dbReference type="EnsemblBacteria" id="CAB13256">
    <property type="protein sequence ID" value="CAB13256"/>
    <property type="gene ID" value="BSU_13830"/>
</dbReference>
<dbReference type="GeneID" id="939262"/>
<dbReference type="KEGG" id="bsu:BSU13830"/>
<dbReference type="PATRIC" id="fig|224308.179.peg.1507"/>
<dbReference type="eggNOG" id="COG2244">
    <property type="taxonomic scope" value="Bacteria"/>
</dbReference>
<dbReference type="InParanoid" id="O31686"/>
<dbReference type="OrthoDB" id="9775950at2"/>
<dbReference type="PhylomeDB" id="O31686"/>
<dbReference type="BioCyc" id="BSUB:BSU13830-MONOMER"/>
<dbReference type="Proteomes" id="UP000001570">
    <property type="component" value="Chromosome"/>
</dbReference>
<dbReference type="GO" id="GO:0016020">
    <property type="term" value="C:membrane"/>
    <property type="evidence" value="ECO:0007669"/>
    <property type="project" value="UniProtKB-KW"/>
</dbReference>
<dbReference type="GO" id="GO:0030435">
    <property type="term" value="P:sporulation resulting in formation of a cellular spore"/>
    <property type="evidence" value="ECO:0007669"/>
    <property type="project" value="UniProtKB-KW"/>
</dbReference>
<dbReference type="CDD" id="cd13124">
    <property type="entry name" value="MATE_SpoVB_like"/>
    <property type="match status" value="1"/>
</dbReference>
<dbReference type="InterPro" id="IPR051327">
    <property type="entry name" value="MATE_MepA_subfamily"/>
</dbReference>
<dbReference type="InterPro" id="IPR024923">
    <property type="entry name" value="PG_synth_SpoVB"/>
</dbReference>
<dbReference type="InterPro" id="IPR002797">
    <property type="entry name" value="Polysacc_synth"/>
</dbReference>
<dbReference type="PANTHER" id="PTHR43823">
    <property type="entry name" value="SPORULATION PROTEIN YKVU"/>
    <property type="match status" value="1"/>
</dbReference>
<dbReference type="PANTHER" id="PTHR43823:SF4">
    <property type="entry name" value="SPORULATION PROTEIN YKVU"/>
    <property type="match status" value="1"/>
</dbReference>
<dbReference type="Pfam" id="PF01943">
    <property type="entry name" value="Polysacc_synt"/>
    <property type="match status" value="1"/>
</dbReference>
<dbReference type="PIRSF" id="PIRSF038958">
    <property type="entry name" value="PG_synth_SpoVB"/>
    <property type="match status" value="1"/>
</dbReference>
<feature type="chain" id="PRO_0000049611" description="Sporulation protein YkvU">
    <location>
        <begin position="1"/>
        <end position="445"/>
    </location>
</feature>
<feature type="transmembrane region" description="Helical" evidence="1">
    <location>
        <begin position="7"/>
        <end position="29"/>
    </location>
</feature>
<feature type="transmembrane region" description="Helical" evidence="1">
    <location>
        <begin position="39"/>
        <end position="61"/>
    </location>
</feature>
<feature type="transmembrane region" description="Helical" evidence="1">
    <location>
        <begin position="82"/>
        <end position="104"/>
    </location>
</feature>
<feature type="transmembrane region" description="Helical" evidence="1">
    <location>
        <begin position="109"/>
        <end position="131"/>
    </location>
</feature>
<feature type="transmembrane region" description="Helical" evidence="1">
    <location>
        <begin position="144"/>
        <end position="166"/>
    </location>
</feature>
<feature type="transmembrane region" description="Helical" evidence="1">
    <location>
        <begin position="172"/>
        <end position="194"/>
    </location>
</feature>
<feature type="transmembrane region" description="Helical" evidence="1">
    <location>
        <begin position="237"/>
        <end position="259"/>
    </location>
</feature>
<feature type="transmembrane region" description="Helical" evidence="1">
    <location>
        <begin position="269"/>
        <end position="291"/>
    </location>
</feature>
<feature type="transmembrane region" description="Helical" evidence="1">
    <location>
        <begin position="312"/>
        <end position="334"/>
    </location>
</feature>
<feature type="transmembrane region" description="Helical" evidence="1">
    <location>
        <begin position="349"/>
        <end position="371"/>
    </location>
</feature>
<feature type="transmembrane region" description="Helical" evidence="1">
    <location>
        <begin position="376"/>
        <end position="395"/>
    </location>
</feature>
<feature type="transmembrane region" description="Helical" evidence="1">
    <location>
        <begin position="400"/>
        <end position="422"/>
    </location>
</feature>
<organism>
    <name type="scientific">Bacillus subtilis (strain 168)</name>
    <dbReference type="NCBI Taxonomy" id="224308"/>
    <lineage>
        <taxon>Bacteria</taxon>
        <taxon>Bacillati</taxon>
        <taxon>Bacillota</taxon>
        <taxon>Bacilli</taxon>
        <taxon>Bacillales</taxon>
        <taxon>Bacillaceae</taxon>
        <taxon>Bacillus</taxon>
    </lineage>
</organism>
<proteinExistence type="evidence at protein level"/>
<sequence length="445" mass="49398">MNRFVKGIILLSIAAFFAECLEFVVNMILARELGEHGMGLYMSILPTIFLIIVIASLELPISISKFIAESNPKLHESMLRHAFRMTAIFTAFSTAAASIALPFIPVFDTYHPFIKGIVIGLIPVVAFTSIARGYFMGVQKMGKIAIANVLKKIIQLLCLFLFFQWYSFELDMAVLISLFVLVVSDVVVLVYLYSQFIMARRALSGQQHIHLRGKDVRKRLLAVSIPTTGLRIFHAVVNAIEPFLVKGALLAAGVAGTAAIDQYGMLAGVAVTIGSFPAFIAHSLMVVMIPSISEAYALSQYDIVLKRLKQSIFITLGYGIPAVWVMFQFAGPLTHLFFHSPEAQYYLQLLWPYFLFHLFVMPLQACLIGMGFVKEAFYHNVWSHIVALSMMYVLGSMENLQMLGIILGMNTGMILLTSLHYATICKALKVSVFLTGGTRTPRIEG</sequence>
<evidence type="ECO:0000255" key="1"/>
<evidence type="ECO:0000269" key="2">
    <source>
    </source>
</evidence>
<evidence type="ECO:0000305" key="3"/>
<keyword id="KW-0472">Membrane</keyword>
<keyword id="KW-1185">Reference proteome</keyword>
<keyword id="KW-0749">Sporulation</keyword>
<keyword id="KW-0812">Transmembrane</keyword>
<keyword id="KW-1133">Transmembrane helix</keyword>
<reference key="1">
    <citation type="journal article" date="1997" name="Nature">
        <title>The complete genome sequence of the Gram-positive bacterium Bacillus subtilis.</title>
        <authorList>
            <person name="Kunst F."/>
            <person name="Ogasawara N."/>
            <person name="Moszer I."/>
            <person name="Albertini A.M."/>
            <person name="Alloni G."/>
            <person name="Azevedo V."/>
            <person name="Bertero M.G."/>
            <person name="Bessieres P."/>
            <person name="Bolotin A."/>
            <person name="Borchert S."/>
            <person name="Borriss R."/>
            <person name="Boursier L."/>
            <person name="Brans A."/>
            <person name="Braun M."/>
            <person name="Brignell S.C."/>
            <person name="Bron S."/>
            <person name="Brouillet S."/>
            <person name="Bruschi C.V."/>
            <person name="Caldwell B."/>
            <person name="Capuano V."/>
            <person name="Carter N.M."/>
            <person name="Choi S.-K."/>
            <person name="Codani J.-J."/>
            <person name="Connerton I.F."/>
            <person name="Cummings N.J."/>
            <person name="Daniel R.A."/>
            <person name="Denizot F."/>
            <person name="Devine K.M."/>
            <person name="Duesterhoeft A."/>
            <person name="Ehrlich S.D."/>
            <person name="Emmerson P.T."/>
            <person name="Entian K.-D."/>
            <person name="Errington J."/>
            <person name="Fabret C."/>
            <person name="Ferrari E."/>
            <person name="Foulger D."/>
            <person name="Fritz C."/>
            <person name="Fujita M."/>
            <person name="Fujita Y."/>
            <person name="Fuma S."/>
            <person name="Galizzi A."/>
            <person name="Galleron N."/>
            <person name="Ghim S.-Y."/>
            <person name="Glaser P."/>
            <person name="Goffeau A."/>
            <person name="Golightly E.J."/>
            <person name="Grandi G."/>
            <person name="Guiseppi G."/>
            <person name="Guy B.J."/>
            <person name="Haga K."/>
            <person name="Haiech J."/>
            <person name="Harwood C.R."/>
            <person name="Henaut A."/>
            <person name="Hilbert H."/>
            <person name="Holsappel S."/>
            <person name="Hosono S."/>
            <person name="Hullo M.-F."/>
            <person name="Itaya M."/>
            <person name="Jones L.-M."/>
            <person name="Joris B."/>
            <person name="Karamata D."/>
            <person name="Kasahara Y."/>
            <person name="Klaerr-Blanchard M."/>
            <person name="Klein C."/>
            <person name="Kobayashi Y."/>
            <person name="Koetter P."/>
            <person name="Koningstein G."/>
            <person name="Krogh S."/>
            <person name="Kumano M."/>
            <person name="Kurita K."/>
            <person name="Lapidus A."/>
            <person name="Lardinois S."/>
            <person name="Lauber J."/>
            <person name="Lazarevic V."/>
            <person name="Lee S.-M."/>
            <person name="Levine A."/>
            <person name="Liu H."/>
            <person name="Masuda S."/>
            <person name="Mauel C."/>
            <person name="Medigue C."/>
            <person name="Medina N."/>
            <person name="Mellado R.P."/>
            <person name="Mizuno M."/>
            <person name="Moestl D."/>
            <person name="Nakai S."/>
            <person name="Noback M."/>
            <person name="Noone D."/>
            <person name="O'Reilly M."/>
            <person name="Ogawa K."/>
            <person name="Ogiwara A."/>
            <person name="Oudega B."/>
            <person name="Park S.-H."/>
            <person name="Parro V."/>
            <person name="Pohl T.M."/>
            <person name="Portetelle D."/>
            <person name="Porwollik S."/>
            <person name="Prescott A.M."/>
            <person name="Presecan E."/>
            <person name="Pujic P."/>
            <person name="Purnelle B."/>
            <person name="Rapoport G."/>
            <person name="Rey M."/>
            <person name="Reynolds S."/>
            <person name="Rieger M."/>
            <person name="Rivolta C."/>
            <person name="Rocha E."/>
            <person name="Roche B."/>
            <person name="Rose M."/>
            <person name="Sadaie Y."/>
            <person name="Sato T."/>
            <person name="Scanlan E."/>
            <person name="Schleich S."/>
            <person name="Schroeter R."/>
            <person name="Scoffone F."/>
            <person name="Sekiguchi J."/>
            <person name="Sekowska A."/>
            <person name="Seror S.J."/>
            <person name="Serror P."/>
            <person name="Shin B.-S."/>
            <person name="Soldo B."/>
            <person name="Sorokin A."/>
            <person name="Tacconi E."/>
            <person name="Takagi T."/>
            <person name="Takahashi H."/>
            <person name="Takemaru K."/>
            <person name="Takeuchi M."/>
            <person name="Tamakoshi A."/>
            <person name="Tanaka T."/>
            <person name="Terpstra P."/>
            <person name="Tognoni A."/>
            <person name="Tosato V."/>
            <person name="Uchiyama S."/>
            <person name="Vandenbol M."/>
            <person name="Vannier F."/>
            <person name="Vassarotti A."/>
            <person name="Viari A."/>
            <person name="Wambutt R."/>
            <person name="Wedler E."/>
            <person name="Wedler H."/>
            <person name="Weitzenegger T."/>
            <person name="Winters P."/>
            <person name="Wipat A."/>
            <person name="Yamamoto H."/>
            <person name="Yamane K."/>
            <person name="Yasumoto K."/>
            <person name="Yata K."/>
            <person name="Yoshida K."/>
            <person name="Yoshikawa H.-F."/>
            <person name="Zumstein E."/>
            <person name="Yoshikawa H."/>
            <person name="Danchin A."/>
        </authorList>
    </citation>
    <scope>NUCLEOTIDE SEQUENCE [LARGE SCALE GENOMIC DNA]</scope>
    <source>
        <strain>168</strain>
    </source>
</reference>
<reference key="2">
    <citation type="journal article" date="2003" name="J. Mol. Biol.">
        <title>The sigmaE regulon and the identification of additional sporulation genes in Bacillus subtilis.</title>
        <authorList>
            <person name="Eichenberger P."/>
            <person name="Jensen S.T."/>
            <person name="Conlon E.M."/>
            <person name="van Ooij C."/>
            <person name="Silvaggi J."/>
            <person name="Gonzalez-Pastor J.-E."/>
            <person name="Fujita M."/>
            <person name="Ben-Yehuda S."/>
            <person name="Stragier P."/>
            <person name="Liu J.S."/>
            <person name="Losick R."/>
        </authorList>
    </citation>
    <scope>INTERACTION WITH SIGMA E</scope>
    <scope>SUBCELLULAR LOCATION</scope>
</reference>
<reference key="3">
    <citation type="journal article" date="2004" name="J. Bacteriol.">
        <title>spoIVH (ykvV), a requisite cortex formation gene, is expressed in both sporulating compartments of Bacillus subtilis.</title>
        <authorList>
            <person name="Imamura D."/>
            <person name="Kobayashi K."/>
            <person name="Sekiguchi J."/>
            <person name="Ogasawara N."/>
            <person name="Takeuchi M."/>
            <person name="Sato T."/>
        </authorList>
    </citation>
    <scope>COTRANSCRIPTION WITH STOA</scope>
</reference>
<comment type="subcellular location">
    <subcellularLocation>
        <location evidence="3">Forespore membrane</location>
        <topology evidence="3">Multi-pass membrane protein</topology>
    </subcellularLocation>
    <text evidence="2">Integral membrane protein. Shortly after the initiation of the engulfment, is localized to the sporulation septum. During later stages of sporulation, remains associated with the outer forespore membrane.</text>
</comment>
<comment type="miscellaneous">
    <text>YkvU and stoA are cotranscribed under the control of sigma E.</text>
</comment>
<accession>O31686</accession>